<comment type="function">
    <text evidence="1">Catalyzes the conversion of glucosamine-6-phosphate to glucosamine-1-phosphate.</text>
</comment>
<comment type="catalytic activity">
    <reaction evidence="1">
        <text>alpha-D-glucosamine 1-phosphate = D-glucosamine 6-phosphate</text>
        <dbReference type="Rhea" id="RHEA:23424"/>
        <dbReference type="ChEBI" id="CHEBI:58516"/>
        <dbReference type="ChEBI" id="CHEBI:58725"/>
        <dbReference type="EC" id="5.4.2.10"/>
    </reaction>
</comment>
<comment type="cofactor">
    <cofactor evidence="1">
        <name>Mg(2+)</name>
        <dbReference type="ChEBI" id="CHEBI:18420"/>
    </cofactor>
    <text evidence="1">Binds 1 Mg(2+) ion per subunit.</text>
</comment>
<comment type="PTM">
    <text evidence="1">Activated by phosphorylation.</text>
</comment>
<comment type="similarity">
    <text evidence="1">Belongs to the phosphohexose mutase family.</text>
</comment>
<reference key="1">
    <citation type="submission" date="2007-11" db="EMBL/GenBank/DDBJ databases">
        <title>The genome sequence of the hyperthermophilic bacterium Thermotoga neapolitana.</title>
        <authorList>
            <person name="Lim S.K."/>
            <person name="Kim J.S."/>
            <person name="Cha S.H."/>
            <person name="Park B.C."/>
            <person name="Lee D.S."/>
            <person name="Tae H.S."/>
            <person name="Kim S.-J."/>
            <person name="Kim J.J."/>
            <person name="Park K.J."/>
            <person name="Lee S.Y."/>
        </authorList>
    </citation>
    <scope>NUCLEOTIDE SEQUENCE [LARGE SCALE GENOMIC DNA]</scope>
    <source>
        <strain>ATCC 49049 / DSM 4359 / NBRC 107923 / NS-E</strain>
    </source>
</reference>
<proteinExistence type="inferred from homology"/>
<protein>
    <recommendedName>
        <fullName evidence="1">Phosphoglucosamine mutase</fullName>
        <ecNumber evidence="1">5.4.2.10</ecNumber>
    </recommendedName>
</protein>
<keyword id="KW-0413">Isomerase</keyword>
<keyword id="KW-0460">Magnesium</keyword>
<keyword id="KW-0479">Metal-binding</keyword>
<keyword id="KW-0597">Phosphoprotein</keyword>
<feature type="chain" id="PRO_1000185390" description="Phosphoglucosamine mutase">
    <location>
        <begin position="1"/>
        <end position="428"/>
    </location>
</feature>
<feature type="active site" description="Phosphoserine intermediate" evidence="1">
    <location>
        <position position="96"/>
    </location>
</feature>
<feature type="binding site" description="via phosphate group" evidence="1">
    <location>
        <position position="96"/>
    </location>
    <ligand>
        <name>Mg(2+)</name>
        <dbReference type="ChEBI" id="CHEBI:18420"/>
    </ligand>
</feature>
<feature type="binding site" evidence="1">
    <location>
        <position position="229"/>
    </location>
    <ligand>
        <name>Mg(2+)</name>
        <dbReference type="ChEBI" id="CHEBI:18420"/>
    </ligand>
</feature>
<feature type="binding site" evidence="1">
    <location>
        <position position="231"/>
    </location>
    <ligand>
        <name>Mg(2+)</name>
        <dbReference type="ChEBI" id="CHEBI:18420"/>
    </ligand>
</feature>
<feature type="binding site" evidence="1">
    <location>
        <position position="233"/>
    </location>
    <ligand>
        <name>Mg(2+)</name>
        <dbReference type="ChEBI" id="CHEBI:18420"/>
    </ligand>
</feature>
<feature type="modified residue" description="Phosphoserine" evidence="1">
    <location>
        <position position="96"/>
    </location>
</feature>
<sequence>MKVRYFGTDGIRGVFGDTLTDELAFKVGKALGEIVGEGKVLIGKDTRVSGDSLEAALAAGLTSMGVDVLSCGILPTPAVALLTRITRSYGVVISASHNPPEYNGIKVLKNGYKIPDELEEEIERRMEGEFQRRYVVGKIKSFREGKDMYIGAVLEMFKDLDLSGKSVSLDLANGATTTTAKDVFEFLGAEVEVFNSSQDGLLINQGCGATHPKFLAEEMKRGRIGFSFDGDGDRVIAVDEERNVVNGDKIIGILAEGMMEEGRLRESVVVGTIMTNGGLEEYLRKRGIELVRTKVGDKYVLEEMLKSGANLGGERSGHIIILDRSTTGDGLITALELMRVVERLKKNLSDLAKEIPDLPQITRNVRRTEKTSLENGRLRELIERYSAEGYRIVVRPSGTEPVVRITVEGKDRNRVEEIAEELSRILEG</sequence>
<organism>
    <name type="scientific">Thermotoga neapolitana (strain ATCC 49049 / DSM 4359 / NBRC 107923 / NS-E)</name>
    <dbReference type="NCBI Taxonomy" id="309803"/>
    <lineage>
        <taxon>Bacteria</taxon>
        <taxon>Thermotogati</taxon>
        <taxon>Thermotogota</taxon>
        <taxon>Thermotogae</taxon>
        <taxon>Thermotogales</taxon>
        <taxon>Thermotogaceae</taxon>
        <taxon>Thermotoga</taxon>
    </lineage>
</organism>
<evidence type="ECO:0000255" key="1">
    <source>
        <dbReference type="HAMAP-Rule" id="MF_01554"/>
    </source>
</evidence>
<dbReference type="EC" id="5.4.2.10" evidence="1"/>
<dbReference type="EMBL" id="CP000916">
    <property type="protein sequence ID" value="ACM22679.1"/>
    <property type="molecule type" value="Genomic_DNA"/>
</dbReference>
<dbReference type="RefSeq" id="WP_015918998.1">
    <property type="nucleotide sequence ID" value="NC_011978.1"/>
</dbReference>
<dbReference type="SMR" id="B9K6U6"/>
<dbReference type="STRING" id="309803.CTN_0503"/>
<dbReference type="KEGG" id="tna:CTN_0503"/>
<dbReference type="eggNOG" id="COG1109">
    <property type="taxonomic scope" value="Bacteria"/>
</dbReference>
<dbReference type="HOGENOM" id="CLU_016950_7_0_0"/>
<dbReference type="Proteomes" id="UP000000445">
    <property type="component" value="Chromosome"/>
</dbReference>
<dbReference type="GO" id="GO:0005829">
    <property type="term" value="C:cytosol"/>
    <property type="evidence" value="ECO:0007669"/>
    <property type="project" value="TreeGrafter"/>
</dbReference>
<dbReference type="GO" id="GO:0000287">
    <property type="term" value="F:magnesium ion binding"/>
    <property type="evidence" value="ECO:0007669"/>
    <property type="project" value="UniProtKB-UniRule"/>
</dbReference>
<dbReference type="GO" id="GO:0008966">
    <property type="term" value="F:phosphoglucosamine mutase activity"/>
    <property type="evidence" value="ECO:0007669"/>
    <property type="project" value="UniProtKB-UniRule"/>
</dbReference>
<dbReference type="GO" id="GO:0004615">
    <property type="term" value="F:phosphomannomutase activity"/>
    <property type="evidence" value="ECO:0007669"/>
    <property type="project" value="TreeGrafter"/>
</dbReference>
<dbReference type="GO" id="GO:0005975">
    <property type="term" value="P:carbohydrate metabolic process"/>
    <property type="evidence" value="ECO:0007669"/>
    <property type="project" value="InterPro"/>
</dbReference>
<dbReference type="GO" id="GO:0009252">
    <property type="term" value="P:peptidoglycan biosynthetic process"/>
    <property type="evidence" value="ECO:0007669"/>
    <property type="project" value="TreeGrafter"/>
</dbReference>
<dbReference type="GO" id="GO:0006048">
    <property type="term" value="P:UDP-N-acetylglucosamine biosynthetic process"/>
    <property type="evidence" value="ECO:0007669"/>
    <property type="project" value="TreeGrafter"/>
</dbReference>
<dbReference type="CDD" id="cd05802">
    <property type="entry name" value="GlmM"/>
    <property type="match status" value="1"/>
</dbReference>
<dbReference type="FunFam" id="3.40.120.10:FF:000001">
    <property type="entry name" value="Phosphoglucosamine mutase"/>
    <property type="match status" value="1"/>
</dbReference>
<dbReference type="FunFam" id="3.40.120.10:FF:000002">
    <property type="entry name" value="Phosphoglucosamine mutase"/>
    <property type="match status" value="1"/>
</dbReference>
<dbReference type="Gene3D" id="3.40.120.10">
    <property type="entry name" value="Alpha-D-Glucose-1,6-Bisphosphate, subunit A, domain 3"/>
    <property type="match status" value="3"/>
</dbReference>
<dbReference type="Gene3D" id="3.30.310.50">
    <property type="entry name" value="Alpha-D-phosphohexomutase, C-terminal domain"/>
    <property type="match status" value="1"/>
</dbReference>
<dbReference type="HAMAP" id="MF_01554_B">
    <property type="entry name" value="GlmM_B"/>
    <property type="match status" value="1"/>
</dbReference>
<dbReference type="InterPro" id="IPR005844">
    <property type="entry name" value="A-D-PHexomutase_a/b/a-I"/>
</dbReference>
<dbReference type="InterPro" id="IPR016055">
    <property type="entry name" value="A-D-PHexomutase_a/b/a-I/II/III"/>
</dbReference>
<dbReference type="InterPro" id="IPR005845">
    <property type="entry name" value="A-D-PHexomutase_a/b/a-II"/>
</dbReference>
<dbReference type="InterPro" id="IPR005846">
    <property type="entry name" value="A-D-PHexomutase_a/b/a-III"/>
</dbReference>
<dbReference type="InterPro" id="IPR005843">
    <property type="entry name" value="A-D-PHexomutase_C"/>
</dbReference>
<dbReference type="InterPro" id="IPR036900">
    <property type="entry name" value="A-D-PHexomutase_C_sf"/>
</dbReference>
<dbReference type="InterPro" id="IPR016066">
    <property type="entry name" value="A-D-PHexomutase_CS"/>
</dbReference>
<dbReference type="InterPro" id="IPR005841">
    <property type="entry name" value="Alpha-D-phosphohexomutase_SF"/>
</dbReference>
<dbReference type="InterPro" id="IPR006352">
    <property type="entry name" value="GlmM_bact"/>
</dbReference>
<dbReference type="InterPro" id="IPR050060">
    <property type="entry name" value="Phosphoglucosamine_mutase"/>
</dbReference>
<dbReference type="NCBIfam" id="TIGR01455">
    <property type="entry name" value="glmM"/>
    <property type="match status" value="1"/>
</dbReference>
<dbReference type="PANTHER" id="PTHR42946:SF1">
    <property type="entry name" value="PHOSPHOGLUCOMUTASE (ALPHA-D-GLUCOSE-1,6-BISPHOSPHATE-DEPENDENT)"/>
    <property type="match status" value="1"/>
</dbReference>
<dbReference type="PANTHER" id="PTHR42946">
    <property type="entry name" value="PHOSPHOHEXOSE MUTASE"/>
    <property type="match status" value="1"/>
</dbReference>
<dbReference type="Pfam" id="PF02878">
    <property type="entry name" value="PGM_PMM_I"/>
    <property type="match status" value="1"/>
</dbReference>
<dbReference type="Pfam" id="PF02879">
    <property type="entry name" value="PGM_PMM_II"/>
    <property type="match status" value="1"/>
</dbReference>
<dbReference type="Pfam" id="PF02880">
    <property type="entry name" value="PGM_PMM_III"/>
    <property type="match status" value="1"/>
</dbReference>
<dbReference type="Pfam" id="PF00408">
    <property type="entry name" value="PGM_PMM_IV"/>
    <property type="match status" value="1"/>
</dbReference>
<dbReference type="PRINTS" id="PR00509">
    <property type="entry name" value="PGMPMM"/>
</dbReference>
<dbReference type="SUPFAM" id="SSF55957">
    <property type="entry name" value="Phosphoglucomutase, C-terminal domain"/>
    <property type="match status" value="1"/>
</dbReference>
<dbReference type="SUPFAM" id="SSF53738">
    <property type="entry name" value="Phosphoglucomutase, first 3 domains"/>
    <property type="match status" value="3"/>
</dbReference>
<dbReference type="PROSITE" id="PS00710">
    <property type="entry name" value="PGM_PMM"/>
    <property type="match status" value="1"/>
</dbReference>
<gene>
    <name evidence="1" type="primary">glmM</name>
    <name type="ordered locus">CTN_0503</name>
</gene>
<name>GLMM_THENN</name>
<accession>B9K6U6</accession>